<dbReference type="EMBL" id="AE014075">
    <property type="protein sequence ID" value="AAN83512.1"/>
    <property type="molecule type" value="Genomic_DNA"/>
</dbReference>
<dbReference type="RefSeq" id="WP_000446365.1">
    <property type="nucleotide sequence ID" value="NZ_CP051263.1"/>
</dbReference>
<dbReference type="SMR" id="Q8FAX1"/>
<dbReference type="STRING" id="199310.c5087"/>
<dbReference type="KEGG" id="ecc:c5087"/>
<dbReference type="eggNOG" id="COG1566">
    <property type="taxonomic scope" value="Bacteria"/>
</dbReference>
<dbReference type="HOGENOM" id="CLU_018816_15_2_6"/>
<dbReference type="BioCyc" id="ECOL199310:C5087-MONOMER"/>
<dbReference type="Proteomes" id="UP000001410">
    <property type="component" value="Chromosome"/>
</dbReference>
<dbReference type="GO" id="GO:0005886">
    <property type="term" value="C:plasma membrane"/>
    <property type="evidence" value="ECO:0007669"/>
    <property type="project" value="UniProtKB-SubCell"/>
</dbReference>
<dbReference type="GO" id="GO:0042910">
    <property type="term" value="F:xenobiotic transmembrane transporter activity"/>
    <property type="evidence" value="ECO:0007669"/>
    <property type="project" value="InterPro"/>
</dbReference>
<dbReference type="GO" id="GO:0046677">
    <property type="term" value="P:response to antibiotic"/>
    <property type="evidence" value="ECO:0007669"/>
    <property type="project" value="UniProtKB-KW"/>
</dbReference>
<dbReference type="GO" id="GO:1990961">
    <property type="term" value="P:xenobiotic detoxification by transmembrane export across the plasma membrane"/>
    <property type="evidence" value="ECO:0007669"/>
    <property type="project" value="InterPro"/>
</dbReference>
<dbReference type="FunFam" id="2.40.30.170:FF:000008">
    <property type="entry name" value="Multidrug resistance protein MdtN"/>
    <property type="match status" value="1"/>
</dbReference>
<dbReference type="Gene3D" id="2.40.30.170">
    <property type="match status" value="1"/>
</dbReference>
<dbReference type="Gene3D" id="2.40.50.100">
    <property type="match status" value="1"/>
</dbReference>
<dbReference type="Gene3D" id="1.10.287.470">
    <property type="entry name" value="Helix hairpin bin"/>
    <property type="match status" value="2"/>
</dbReference>
<dbReference type="InterPro" id="IPR043602">
    <property type="entry name" value="CusB-like_dom_1"/>
</dbReference>
<dbReference type="InterPro" id="IPR032317">
    <property type="entry name" value="CusB_D23"/>
</dbReference>
<dbReference type="InterPro" id="IPR050393">
    <property type="entry name" value="MFP_Efflux_Pump"/>
</dbReference>
<dbReference type="InterPro" id="IPR005694">
    <property type="entry name" value="MFP_proteobact"/>
</dbReference>
<dbReference type="NCBIfam" id="TIGR00998">
    <property type="entry name" value="8a0101"/>
    <property type="match status" value="1"/>
</dbReference>
<dbReference type="NCBIfam" id="NF007785">
    <property type="entry name" value="PRK10476.1"/>
    <property type="match status" value="1"/>
</dbReference>
<dbReference type="PANTHER" id="PTHR30367:SF1">
    <property type="entry name" value="MULTIDRUG RESISTANCE PROTEIN MDTN"/>
    <property type="match status" value="1"/>
</dbReference>
<dbReference type="PANTHER" id="PTHR30367">
    <property type="entry name" value="P-HYDROXYBENZOIC ACID EFFLUX PUMP SUBUNIT AAEA-RELATED"/>
    <property type="match status" value="1"/>
</dbReference>
<dbReference type="Pfam" id="PF00529">
    <property type="entry name" value="CusB_dom_1"/>
    <property type="match status" value="1"/>
</dbReference>
<dbReference type="Pfam" id="PF16576">
    <property type="entry name" value="HlyD_D23"/>
    <property type="match status" value="1"/>
</dbReference>
<dbReference type="SUPFAM" id="SSF111369">
    <property type="entry name" value="HlyD-like secretion proteins"/>
    <property type="match status" value="2"/>
</dbReference>
<sequence>MESTPKKAPRSKFPALLVVALALVALVFVIWRVDSAPSTNDAYASADTIDVVPEVSGRIVELAVTDNQAVKQGDLLFRIDPRPYEANLAKAEASLAALDKQIMLTQRSVDAQQFGADSVNATVEKARAAAKQASDTLRRTEPLLREGFVSAEEVDRARTAQRAAEADLNAVLLQAQSAASAVSGVDALVAQRAAVEADIALTKLHLEMATVRAPFDGRVISLKTSVGQFASAMRPIFTLIDTRHWYVIANFRETDLKNIRSGTPATIRLMSDSGKTFEGKVDSIGYGVLPDDGGLVLGGLPKVSRSINWVRVAQRFPVKIMVDKPDPEMFRIGASAVANLEPQ</sequence>
<organism>
    <name type="scientific">Escherichia coli O6:H1 (strain CFT073 / ATCC 700928 / UPEC)</name>
    <dbReference type="NCBI Taxonomy" id="199310"/>
    <lineage>
        <taxon>Bacteria</taxon>
        <taxon>Pseudomonadati</taxon>
        <taxon>Pseudomonadota</taxon>
        <taxon>Gammaproteobacteria</taxon>
        <taxon>Enterobacterales</taxon>
        <taxon>Enterobacteriaceae</taxon>
        <taxon>Escherichia</taxon>
    </lineage>
</organism>
<evidence type="ECO:0000250" key="1"/>
<evidence type="ECO:0000255" key="2"/>
<evidence type="ECO:0000305" key="3"/>
<keyword id="KW-0046">Antibiotic resistance</keyword>
<keyword id="KW-0997">Cell inner membrane</keyword>
<keyword id="KW-1003">Cell membrane</keyword>
<keyword id="KW-0472">Membrane</keyword>
<keyword id="KW-1185">Reference proteome</keyword>
<keyword id="KW-0735">Signal-anchor</keyword>
<keyword id="KW-0812">Transmembrane</keyword>
<keyword id="KW-1133">Transmembrane helix</keyword>
<keyword id="KW-0813">Transport</keyword>
<reference key="1">
    <citation type="journal article" date="2002" name="Proc. Natl. Acad. Sci. U.S.A.">
        <title>Extensive mosaic structure revealed by the complete genome sequence of uropathogenic Escherichia coli.</title>
        <authorList>
            <person name="Welch R.A."/>
            <person name="Burland V."/>
            <person name="Plunkett G. III"/>
            <person name="Redford P."/>
            <person name="Roesch P."/>
            <person name="Rasko D."/>
            <person name="Buckles E.L."/>
            <person name="Liou S.-R."/>
            <person name="Boutin A."/>
            <person name="Hackett J."/>
            <person name="Stroud D."/>
            <person name="Mayhew G.F."/>
            <person name="Rose D.J."/>
            <person name="Zhou S."/>
            <person name="Schwartz D.C."/>
            <person name="Perna N.T."/>
            <person name="Mobley H.L.T."/>
            <person name="Donnenberg M.S."/>
            <person name="Blattner F.R."/>
        </authorList>
    </citation>
    <scope>NUCLEOTIDE SEQUENCE [LARGE SCALE GENOMIC DNA]</scope>
    <source>
        <strain>CFT073 / ATCC 700928 / UPEC</strain>
    </source>
</reference>
<feature type="chain" id="PRO_0000201885" description="Multidrug resistance protein MdtN">
    <location>
        <begin position="1"/>
        <end position="343"/>
    </location>
</feature>
<feature type="topological domain" description="Cytoplasmic" evidence="2">
    <location>
        <begin position="1"/>
        <end position="12"/>
    </location>
</feature>
<feature type="transmembrane region" description="Helical; Signal-anchor for type II membrane protein" evidence="2">
    <location>
        <begin position="13"/>
        <end position="33"/>
    </location>
</feature>
<feature type="topological domain" description="Periplasmic" evidence="2">
    <location>
        <begin position="34"/>
        <end position="343"/>
    </location>
</feature>
<proteinExistence type="inferred from homology"/>
<accession>Q8FAX1</accession>
<name>MDTN_ECOL6</name>
<protein>
    <recommendedName>
        <fullName>Multidrug resistance protein MdtN</fullName>
    </recommendedName>
</protein>
<comment type="function">
    <text evidence="1">Could be involved in resistance to puromycin, acriflavine and tetraphenylarsonium chloride.</text>
</comment>
<comment type="subunit">
    <text evidence="1">Could be part of a tripartite efflux system composed of MdtN, MdtO and MdtP.</text>
</comment>
<comment type="subcellular location">
    <subcellularLocation>
        <location evidence="3">Cell inner membrane</location>
        <topology evidence="3">Single-pass type II membrane protein</topology>
    </subcellularLocation>
</comment>
<comment type="similarity">
    <text evidence="3">Belongs to the membrane fusion protein (MFP) (TC 8.A.1) family.</text>
</comment>
<gene>
    <name type="primary">mdtN</name>
    <name type="ordered locus">c5087</name>
</gene>